<accession>A8AQC8</accession>
<organism>
    <name type="scientific">Citrobacter koseri (strain ATCC BAA-895 / CDC 4225-83 / SGSC4696)</name>
    <dbReference type="NCBI Taxonomy" id="290338"/>
    <lineage>
        <taxon>Bacteria</taxon>
        <taxon>Pseudomonadati</taxon>
        <taxon>Pseudomonadota</taxon>
        <taxon>Gammaproteobacteria</taxon>
        <taxon>Enterobacterales</taxon>
        <taxon>Enterobacteriaceae</taxon>
        <taxon>Citrobacter</taxon>
    </lineage>
</organism>
<gene>
    <name evidence="1" type="primary">mdh</name>
    <name type="ordered locus">CKO_04641</name>
</gene>
<proteinExistence type="inferred from homology"/>
<comment type="function">
    <text evidence="1">Catalyzes the reversible oxidation of malate to oxaloacetate.</text>
</comment>
<comment type="catalytic activity">
    <reaction evidence="1">
        <text>(S)-malate + NAD(+) = oxaloacetate + NADH + H(+)</text>
        <dbReference type="Rhea" id="RHEA:21432"/>
        <dbReference type="ChEBI" id="CHEBI:15378"/>
        <dbReference type="ChEBI" id="CHEBI:15589"/>
        <dbReference type="ChEBI" id="CHEBI:16452"/>
        <dbReference type="ChEBI" id="CHEBI:57540"/>
        <dbReference type="ChEBI" id="CHEBI:57945"/>
        <dbReference type="EC" id="1.1.1.37"/>
    </reaction>
</comment>
<comment type="subunit">
    <text evidence="1">Homodimer.</text>
</comment>
<comment type="similarity">
    <text evidence="1">Belongs to the LDH/MDH superfamily. MDH type 1 family.</text>
</comment>
<sequence>MKVAVLGAAGGIGQALALLLKTQLPSGSELSLYDIAPVTPGVAVDLSHIPTAVKIKGFSGEDATPALEGADVVLISAGVARKPGMDRSDLFNVNAGIVKNLVQQIATTCPKACVGIITNPVNTTVAIAAEVLKKAGVYDKNKLFGVTTLDIIRSNTFVAELKGKLPTDVEVPVIGGHSGVTILPLLSQIPGVSFTEQEVADLTKRIQNAGTEVVEAKAGGGSATLSMGQAAARFGLSLVRALQGEKDVVECAYVEGDGQYARFFSQPLLLGKNGVEERKSIGKLSAFEQNALEGMLDTLKKDIALGEEFVNK</sequence>
<evidence type="ECO:0000255" key="1">
    <source>
        <dbReference type="HAMAP-Rule" id="MF_01516"/>
    </source>
</evidence>
<feature type="chain" id="PRO_1000068584" description="Malate dehydrogenase">
    <location>
        <begin position="1"/>
        <end position="312"/>
    </location>
</feature>
<feature type="active site" description="Proton acceptor" evidence="1">
    <location>
        <position position="177"/>
    </location>
</feature>
<feature type="binding site" evidence="1">
    <location>
        <begin position="7"/>
        <end position="13"/>
    </location>
    <ligand>
        <name>NAD(+)</name>
        <dbReference type="ChEBI" id="CHEBI:57540"/>
    </ligand>
</feature>
<feature type="binding site" evidence="1">
    <location>
        <position position="34"/>
    </location>
    <ligand>
        <name>NAD(+)</name>
        <dbReference type="ChEBI" id="CHEBI:57540"/>
    </ligand>
</feature>
<feature type="binding site" evidence="1">
    <location>
        <position position="81"/>
    </location>
    <ligand>
        <name>substrate</name>
    </ligand>
</feature>
<feature type="binding site" evidence="1">
    <location>
        <position position="87"/>
    </location>
    <ligand>
        <name>substrate</name>
    </ligand>
</feature>
<feature type="binding site" evidence="1">
    <location>
        <position position="94"/>
    </location>
    <ligand>
        <name>NAD(+)</name>
        <dbReference type="ChEBI" id="CHEBI:57540"/>
    </ligand>
</feature>
<feature type="binding site" evidence="1">
    <location>
        <begin position="117"/>
        <end position="119"/>
    </location>
    <ligand>
        <name>NAD(+)</name>
        <dbReference type="ChEBI" id="CHEBI:57540"/>
    </ligand>
</feature>
<feature type="binding site" evidence="1">
    <location>
        <position position="119"/>
    </location>
    <ligand>
        <name>substrate</name>
    </ligand>
</feature>
<feature type="binding site" evidence="1">
    <location>
        <position position="153"/>
    </location>
    <ligand>
        <name>substrate</name>
    </ligand>
</feature>
<feature type="binding site" evidence="1">
    <location>
        <position position="227"/>
    </location>
    <ligand>
        <name>NAD(+)</name>
        <dbReference type="ChEBI" id="CHEBI:57540"/>
    </ligand>
</feature>
<name>MDH_CITK8</name>
<protein>
    <recommendedName>
        <fullName evidence="1">Malate dehydrogenase</fullName>
        <ecNumber evidence="1">1.1.1.37</ecNumber>
    </recommendedName>
</protein>
<reference key="1">
    <citation type="submission" date="2007-08" db="EMBL/GenBank/DDBJ databases">
        <authorList>
            <consortium name="The Citrobacter koseri Genome Sequencing Project"/>
            <person name="McClelland M."/>
            <person name="Sanderson E.K."/>
            <person name="Porwollik S."/>
            <person name="Spieth J."/>
            <person name="Clifton W.S."/>
            <person name="Latreille P."/>
            <person name="Courtney L."/>
            <person name="Wang C."/>
            <person name="Pepin K."/>
            <person name="Bhonagiri V."/>
            <person name="Nash W."/>
            <person name="Johnson M."/>
            <person name="Thiruvilangam P."/>
            <person name="Wilson R."/>
        </authorList>
    </citation>
    <scope>NUCLEOTIDE SEQUENCE [LARGE SCALE GENOMIC DNA]</scope>
    <source>
        <strain>ATCC BAA-895 / CDC 4225-83 / SGSC4696</strain>
    </source>
</reference>
<dbReference type="EC" id="1.1.1.37" evidence="1"/>
<dbReference type="EMBL" id="CP000822">
    <property type="protein sequence ID" value="ABV15691.1"/>
    <property type="molecule type" value="Genomic_DNA"/>
</dbReference>
<dbReference type="RefSeq" id="WP_012135368.1">
    <property type="nucleotide sequence ID" value="NC_009792.1"/>
</dbReference>
<dbReference type="SMR" id="A8AQC8"/>
<dbReference type="STRING" id="290338.CKO_04641"/>
<dbReference type="GeneID" id="45138172"/>
<dbReference type="KEGG" id="cko:CKO_04641"/>
<dbReference type="HOGENOM" id="CLU_047181_1_0_6"/>
<dbReference type="OrthoDB" id="9802969at2"/>
<dbReference type="Proteomes" id="UP000008148">
    <property type="component" value="Chromosome"/>
</dbReference>
<dbReference type="GO" id="GO:0005737">
    <property type="term" value="C:cytoplasm"/>
    <property type="evidence" value="ECO:0007669"/>
    <property type="project" value="TreeGrafter"/>
</dbReference>
<dbReference type="GO" id="GO:0030060">
    <property type="term" value="F:L-malate dehydrogenase (NAD+) activity"/>
    <property type="evidence" value="ECO:0007669"/>
    <property type="project" value="UniProtKB-UniRule"/>
</dbReference>
<dbReference type="GO" id="GO:0006108">
    <property type="term" value="P:malate metabolic process"/>
    <property type="evidence" value="ECO:0007669"/>
    <property type="project" value="InterPro"/>
</dbReference>
<dbReference type="GO" id="GO:0006099">
    <property type="term" value="P:tricarboxylic acid cycle"/>
    <property type="evidence" value="ECO:0007669"/>
    <property type="project" value="UniProtKB-UniRule"/>
</dbReference>
<dbReference type="CDD" id="cd01337">
    <property type="entry name" value="MDH_glyoxysomal_mitochondrial"/>
    <property type="match status" value="1"/>
</dbReference>
<dbReference type="FunFam" id="3.40.50.720:FF:000017">
    <property type="entry name" value="Malate dehydrogenase"/>
    <property type="match status" value="1"/>
</dbReference>
<dbReference type="FunFam" id="3.90.110.10:FF:000001">
    <property type="entry name" value="Malate dehydrogenase"/>
    <property type="match status" value="1"/>
</dbReference>
<dbReference type="Gene3D" id="3.90.110.10">
    <property type="entry name" value="Lactate dehydrogenase/glycoside hydrolase, family 4, C-terminal"/>
    <property type="match status" value="1"/>
</dbReference>
<dbReference type="Gene3D" id="3.40.50.720">
    <property type="entry name" value="NAD(P)-binding Rossmann-like Domain"/>
    <property type="match status" value="1"/>
</dbReference>
<dbReference type="HAMAP" id="MF_01516">
    <property type="entry name" value="Malate_dehydrog_1"/>
    <property type="match status" value="1"/>
</dbReference>
<dbReference type="InterPro" id="IPR001557">
    <property type="entry name" value="L-lactate/malate_DH"/>
</dbReference>
<dbReference type="InterPro" id="IPR022383">
    <property type="entry name" value="Lactate/malate_DH_C"/>
</dbReference>
<dbReference type="InterPro" id="IPR001236">
    <property type="entry name" value="Lactate/malate_DH_N"/>
</dbReference>
<dbReference type="InterPro" id="IPR015955">
    <property type="entry name" value="Lactate_DH/Glyco_Ohase_4_C"/>
</dbReference>
<dbReference type="InterPro" id="IPR001252">
    <property type="entry name" value="Malate_DH_AS"/>
</dbReference>
<dbReference type="InterPro" id="IPR010097">
    <property type="entry name" value="Malate_DH_type1"/>
</dbReference>
<dbReference type="InterPro" id="IPR023958">
    <property type="entry name" value="Malate_DH_type1_bac"/>
</dbReference>
<dbReference type="InterPro" id="IPR036291">
    <property type="entry name" value="NAD(P)-bd_dom_sf"/>
</dbReference>
<dbReference type="NCBIfam" id="TIGR01772">
    <property type="entry name" value="MDH_euk_gproteo"/>
    <property type="match status" value="1"/>
</dbReference>
<dbReference type="PANTHER" id="PTHR11540">
    <property type="entry name" value="MALATE AND LACTATE DEHYDROGENASE"/>
    <property type="match status" value="1"/>
</dbReference>
<dbReference type="PANTHER" id="PTHR11540:SF16">
    <property type="entry name" value="MALATE DEHYDROGENASE, MITOCHONDRIAL"/>
    <property type="match status" value="1"/>
</dbReference>
<dbReference type="Pfam" id="PF02866">
    <property type="entry name" value="Ldh_1_C"/>
    <property type="match status" value="1"/>
</dbReference>
<dbReference type="Pfam" id="PF00056">
    <property type="entry name" value="Ldh_1_N"/>
    <property type="match status" value="1"/>
</dbReference>
<dbReference type="PIRSF" id="PIRSF000102">
    <property type="entry name" value="Lac_mal_DH"/>
    <property type="match status" value="1"/>
</dbReference>
<dbReference type="SUPFAM" id="SSF56327">
    <property type="entry name" value="LDH C-terminal domain-like"/>
    <property type="match status" value="1"/>
</dbReference>
<dbReference type="SUPFAM" id="SSF51735">
    <property type="entry name" value="NAD(P)-binding Rossmann-fold domains"/>
    <property type="match status" value="1"/>
</dbReference>
<dbReference type="PROSITE" id="PS00068">
    <property type="entry name" value="MDH"/>
    <property type="match status" value="1"/>
</dbReference>
<keyword id="KW-0520">NAD</keyword>
<keyword id="KW-0560">Oxidoreductase</keyword>
<keyword id="KW-1185">Reference proteome</keyword>
<keyword id="KW-0816">Tricarboxylic acid cycle</keyword>